<evidence type="ECO:0000250" key="1"/>
<evidence type="ECO:0000255" key="2"/>
<evidence type="ECO:0000305" key="3"/>
<dbReference type="EMBL" id="AC002294">
    <property type="protein sequence ID" value="AAB71468.1"/>
    <property type="status" value="ALT_SEQ"/>
    <property type="molecule type" value="Genomic_DNA"/>
</dbReference>
<dbReference type="EMBL" id="CP002684">
    <property type="protein sequence ID" value="AEE33815.1"/>
    <property type="molecule type" value="Genomic_DNA"/>
</dbReference>
<dbReference type="RefSeq" id="NP_176322.1">
    <property type="nucleotide sequence ID" value="NM_104808.2"/>
</dbReference>
<dbReference type="SMR" id="O22719"/>
<dbReference type="BioGRID" id="27644">
    <property type="interactions" value="1"/>
</dbReference>
<dbReference type="FunCoup" id="O22719">
    <property type="interactions" value="1"/>
</dbReference>
<dbReference type="STRING" id="3702.O22719"/>
<dbReference type="PaxDb" id="3702-AT1G61270.1"/>
<dbReference type="EnsemblPlants" id="AT1G61270.1">
    <property type="protein sequence ID" value="AT1G61270.1"/>
    <property type="gene ID" value="AT1G61270"/>
</dbReference>
<dbReference type="GeneID" id="842421"/>
<dbReference type="Gramene" id="AT1G61270.1">
    <property type="protein sequence ID" value="AT1G61270.1"/>
    <property type="gene ID" value="AT1G61270"/>
</dbReference>
<dbReference type="KEGG" id="ath:AT1G61270"/>
<dbReference type="Araport" id="AT1G61270"/>
<dbReference type="TAIR" id="AT1G61270">
    <property type="gene designation" value="LHT3"/>
</dbReference>
<dbReference type="eggNOG" id="KOG1303">
    <property type="taxonomic scope" value="Eukaryota"/>
</dbReference>
<dbReference type="HOGENOM" id="CLU_031160_0_0_1"/>
<dbReference type="InParanoid" id="O22719"/>
<dbReference type="OMA" id="FWQMIEM"/>
<dbReference type="PhylomeDB" id="O22719"/>
<dbReference type="PRO" id="PR:O22719"/>
<dbReference type="Proteomes" id="UP000006548">
    <property type="component" value="Chromosome 1"/>
</dbReference>
<dbReference type="ExpressionAtlas" id="O22719">
    <property type="expression patterns" value="baseline and differential"/>
</dbReference>
<dbReference type="GO" id="GO:0005886">
    <property type="term" value="C:plasma membrane"/>
    <property type="evidence" value="ECO:0007669"/>
    <property type="project" value="UniProtKB-SubCell"/>
</dbReference>
<dbReference type="GO" id="GO:0006865">
    <property type="term" value="P:amino acid transport"/>
    <property type="evidence" value="ECO:0007669"/>
    <property type="project" value="UniProtKB-KW"/>
</dbReference>
<dbReference type="FunFam" id="1.20.1740.10:FF:000033">
    <property type="entry name" value="Lysine histidine transporter 1"/>
    <property type="match status" value="1"/>
</dbReference>
<dbReference type="Gene3D" id="1.20.1740.10">
    <property type="entry name" value="Amino acid/polyamine transporter I"/>
    <property type="match status" value="1"/>
</dbReference>
<dbReference type="InterPro" id="IPR013057">
    <property type="entry name" value="AA_transpt_TM"/>
</dbReference>
<dbReference type="PANTHER" id="PTHR48017">
    <property type="entry name" value="OS05G0424000 PROTEIN-RELATED"/>
    <property type="match status" value="1"/>
</dbReference>
<dbReference type="Pfam" id="PF01490">
    <property type="entry name" value="Aa_trans"/>
    <property type="match status" value="1"/>
</dbReference>
<protein>
    <recommendedName>
        <fullName>Lysine histidine transporter-like 3</fullName>
    </recommendedName>
</protein>
<comment type="function">
    <text evidence="1">Amino acid transporter.</text>
</comment>
<comment type="subcellular location">
    <subcellularLocation>
        <location evidence="3">Cell membrane</location>
        <topology evidence="3">Multi-pass membrane protein</topology>
    </subcellularLocation>
</comment>
<comment type="similarity">
    <text evidence="3">Belongs to the amino acid/polyamine transporter 2 family. Amino acid/auxin permease (AAAP) (TC 2.A.18.2) subfamily.</text>
</comment>
<comment type="sequence caution" evidence="3">
    <conflict type="erroneous gene model prediction">
        <sequence resource="EMBL-CDS" id="AAB71468"/>
    </conflict>
</comment>
<reference key="1">
    <citation type="journal article" date="2000" name="Nature">
        <title>Sequence and analysis of chromosome 1 of the plant Arabidopsis thaliana.</title>
        <authorList>
            <person name="Theologis A."/>
            <person name="Ecker J.R."/>
            <person name="Palm C.J."/>
            <person name="Federspiel N.A."/>
            <person name="Kaul S."/>
            <person name="White O."/>
            <person name="Alonso J."/>
            <person name="Altafi H."/>
            <person name="Araujo R."/>
            <person name="Bowman C.L."/>
            <person name="Brooks S.Y."/>
            <person name="Buehler E."/>
            <person name="Chan A."/>
            <person name="Chao Q."/>
            <person name="Chen H."/>
            <person name="Cheuk R.F."/>
            <person name="Chin C.W."/>
            <person name="Chung M.K."/>
            <person name="Conn L."/>
            <person name="Conway A.B."/>
            <person name="Conway A.R."/>
            <person name="Creasy T.H."/>
            <person name="Dewar K."/>
            <person name="Dunn P."/>
            <person name="Etgu P."/>
            <person name="Feldblyum T.V."/>
            <person name="Feng J.-D."/>
            <person name="Fong B."/>
            <person name="Fujii C.Y."/>
            <person name="Gill J.E."/>
            <person name="Goldsmith A.D."/>
            <person name="Haas B."/>
            <person name="Hansen N.F."/>
            <person name="Hughes B."/>
            <person name="Huizar L."/>
            <person name="Hunter J.L."/>
            <person name="Jenkins J."/>
            <person name="Johnson-Hopson C."/>
            <person name="Khan S."/>
            <person name="Khaykin E."/>
            <person name="Kim C.J."/>
            <person name="Koo H.L."/>
            <person name="Kremenetskaia I."/>
            <person name="Kurtz D.B."/>
            <person name="Kwan A."/>
            <person name="Lam B."/>
            <person name="Langin-Hooper S."/>
            <person name="Lee A."/>
            <person name="Lee J.M."/>
            <person name="Lenz C.A."/>
            <person name="Li J.H."/>
            <person name="Li Y.-P."/>
            <person name="Lin X."/>
            <person name="Liu S.X."/>
            <person name="Liu Z.A."/>
            <person name="Luros J.S."/>
            <person name="Maiti R."/>
            <person name="Marziali A."/>
            <person name="Militscher J."/>
            <person name="Miranda M."/>
            <person name="Nguyen M."/>
            <person name="Nierman W.C."/>
            <person name="Osborne B.I."/>
            <person name="Pai G."/>
            <person name="Peterson J."/>
            <person name="Pham P.K."/>
            <person name="Rizzo M."/>
            <person name="Rooney T."/>
            <person name="Rowley D."/>
            <person name="Sakano H."/>
            <person name="Salzberg S.L."/>
            <person name="Schwartz J.R."/>
            <person name="Shinn P."/>
            <person name="Southwick A.M."/>
            <person name="Sun H."/>
            <person name="Tallon L.J."/>
            <person name="Tambunga G."/>
            <person name="Toriumi M.J."/>
            <person name="Town C.D."/>
            <person name="Utterback T."/>
            <person name="Van Aken S."/>
            <person name="Vaysberg M."/>
            <person name="Vysotskaia V.S."/>
            <person name="Walker M."/>
            <person name="Wu D."/>
            <person name="Yu G."/>
            <person name="Fraser C.M."/>
            <person name="Venter J.C."/>
            <person name="Davis R.W."/>
        </authorList>
    </citation>
    <scope>NUCLEOTIDE SEQUENCE [LARGE SCALE GENOMIC DNA]</scope>
    <source>
        <strain>cv. Columbia</strain>
    </source>
</reference>
<reference key="2">
    <citation type="journal article" date="2017" name="Plant J.">
        <title>Araport11: a complete reannotation of the Arabidopsis thaliana reference genome.</title>
        <authorList>
            <person name="Cheng C.Y."/>
            <person name="Krishnakumar V."/>
            <person name="Chan A.P."/>
            <person name="Thibaud-Nissen F."/>
            <person name="Schobel S."/>
            <person name="Town C.D."/>
        </authorList>
    </citation>
    <scope>GENOME REANNOTATION</scope>
    <source>
        <strain>cv. Columbia</strain>
    </source>
</reference>
<reference key="3">
    <citation type="journal article" date="2004" name="Plant J.">
        <title>Selective expression of a novel high-affinity transport system for acidic and neutral amino acids in the tapetum cells of Arabidopsis flowers.</title>
        <authorList>
            <person name="Lee Y.-H."/>
            <person name="Tegeder M."/>
        </authorList>
    </citation>
    <scope>GENE FAMILY</scope>
    <source>
        <strain>cv. C24</strain>
    </source>
</reference>
<keyword id="KW-0029">Amino-acid transport</keyword>
<keyword id="KW-1003">Cell membrane</keyword>
<keyword id="KW-0472">Membrane</keyword>
<keyword id="KW-1185">Reference proteome</keyword>
<keyword id="KW-0812">Transmembrane</keyword>
<keyword id="KW-1133">Transmembrane helix</keyword>
<keyword id="KW-0813">Transport</keyword>
<accession>O22719</accession>
<feature type="chain" id="PRO_0000387973" description="Lysine histidine transporter-like 3">
    <location>
        <begin position="1"/>
        <end position="451"/>
    </location>
</feature>
<feature type="topological domain" description="Cytoplasmic" evidence="2">
    <location>
        <begin position="1"/>
        <end position="40"/>
    </location>
</feature>
<feature type="transmembrane region" description="Helical" evidence="2">
    <location>
        <begin position="41"/>
        <end position="61"/>
    </location>
</feature>
<feature type="topological domain" description="Extracellular" evidence="2">
    <location>
        <begin position="62"/>
        <end position="63"/>
    </location>
</feature>
<feature type="transmembrane region" description="Helical" evidence="2">
    <location>
        <begin position="64"/>
        <end position="84"/>
    </location>
</feature>
<feature type="topological domain" description="Cytoplasmic" evidence="2">
    <location>
        <begin position="85"/>
        <end position="115"/>
    </location>
</feature>
<feature type="transmembrane region" description="Helical" evidence="2">
    <location>
        <begin position="116"/>
        <end position="136"/>
    </location>
</feature>
<feature type="topological domain" description="Extracellular" evidence="2">
    <location>
        <begin position="137"/>
        <end position="159"/>
    </location>
</feature>
<feature type="transmembrane region" description="Helical" evidence="2">
    <location>
        <begin position="160"/>
        <end position="177"/>
    </location>
</feature>
<feature type="topological domain" description="Cytoplasmic" evidence="2">
    <location>
        <begin position="178"/>
        <end position="182"/>
    </location>
</feature>
<feature type="transmembrane region" description="Helical" evidence="2">
    <location>
        <begin position="183"/>
        <end position="203"/>
    </location>
</feature>
<feature type="topological domain" description="Extracellular" evidence="2">
    <location>
        <begin position="204"/>
        <end position="227"/>
    </location>
</feature>
<feature type="transmembrane region" description="Helical" evidence="2">
    <location>
        <begin position="228"/>
        <end position="248"/>
    </location>
</feature>
<feature type="topological domain" description="Cytoplasmic" evidence="2">
    <location>
        <begin position="249"/>
        <end position="269"/>
    </location>
</feature>
<feature type="transmembrane region" description="Helical" evidence="2">
    <location>
        <begin position="270"/>
        <end position="290"/>
    </location>
</feature>
<feature type="topological domain" description="Extracellular" evidence="2">
    <location>
        <begin position="291"/>
        <end position="309"/>
    </location>
</feature>
<feature type="transmembrane region" description="Helical" evidence="2">
    <location>
        <begin position="310"/>
        <end position="330"/>
    </location>
</feature>
<feature type="topological domain" description="Cytoplasmic" evidence="2">
    <location>
        <begin position="331"/>
        <end position="358"/>
    </location>
</feature>
<feature type="transmembrane region" description="Helical" evidence="2">
    <location>
        <begin position="359"/>
        <end position="379"/>
    </location>
</feature>
<feature type="topological domain" description="Extracellular" evidence="2">
    <location>
        <position position="380"/>
    </location>
</feature>
<feature type="transmembrane region" description="Helical" evidence="2">
    <location>
        <begin position="381"/>
        <end position="401"/>
    </location>
</feature>
<feature type="topological domain" description="Cytoplasmic" evidence="2">
    <location>
        <begin position="402"/>
        <end position="413"/>
    </location>
</feature>
<feature type="transmembrane region" description="Helical" evidence="2">
    <location>
        <begin position="414"/>
        <end position="434"/>
    </location>
</feature>
<feature type="topological domain" description="Extracellular" evidence="2">
    <location>
        <begin position="435"/>
        <end position="451"/>
    </location>
</feature>
<organism>
    <name type="scientific">Arabidopsis thaliana</name>
    <name type="common">Mouse-ear cress</name>
    <dbReference type="NCBI Taxonomy" id="3702"/>
    <lineage>
        <taxon>Eukaryota</taxon>
        <taxon>Viridiplantae</taxon>
        <taxon>Streptophyta</taxon>
        <taxon>Embryophyta</taxon>
        <taxon>Tracheophyta</taxon>
        <taxon>Spermatophyta</taxon>
        <taxon>Magnoliopsida</taxon>
        <taxon>eudicotyledons</taxon>
        <taxon>Gunneridae</taxon>
        <taxon>Pentapetalae</taxon>
        <taxon>rosids</taxon>
        <taxon>malvids</taxon>
        <taxon>Brassicales</taxon>
        <taxon>Brassicaceae</taxon>
        <taxon>Camelineae</taxon>
        <taxon>Arabidopsis</taxon>
    </lineage>
</organism>
<sequence length="451" mass="50326">MKGIPSSSNQILNQDLVEDQSFELEDWLPITASRNANWYYSAFHNVTAIVGAGVLGLPYAMSELGWGPGVVVLILSWVITLYTFWQMIEMHEMFEGKRFDRYHELGQAAFGKKLGLYIVVPLQLLVETSACIVYMVTGGESLKKIHQLSVGDYECRKLKVRHFILIFASSQFVLSLLKNFNSISGVSLVAAVMSMSYSTIAWVASLTKGVANNVEYGYKRRNNTSVPLAFLGALGEMAFAYAGHNVVLEIQATIPSTPENPSKRPMWKGAIVAYIIVAFCYFPVALVGFWTFGNNVEENILKTLRGPKGLIIVANIFVIIHLMGSYQVYAMPVFDMIESVMIKKWHFSPTRVLRFTIRWTFVAATMGIAVALPHFSALLSFFGGFIFAPTTYFIPCIIWLILKKPKRFSLSWCINWICIILGVLVMIIAPIGGLAKLMNALKQPDSSCKST</sequence>
<name>LHTL3_ARATH</name>
<proteinExistence type="inferred from homology"/>
<gene>
    <name type="ordered locus">At1g61270</name>
    <name type="ORF">F11P17.1</name>
</gene>